<protein>
    <recommendedName>
        <fullName>Putative universal stress protein SSP1056</fullName>
    </recommendedName>
</protein>
<proteinExistence type="inferred from homology"/>
<sequence length="167" mass="18510">MLTYKSILIAVDGSHEAEWAFNKAVDVAKRNDAKLTVVNVIDSRTYSSYEVYDAQFTEKSKNFSDDLLKGYKEVATNAGVKNVETRLEFGSPKAIIPKKLATDVDADLIMCGTSGLNAVERFIVGSVSEAIVRHSPCDVLVVRTEELPEDFQPQVATDEFKSQYQAH</sequence>
<keyword id="KW-0963">Cytoplasm</keyword>
<keyword id="KW-1185">Reference proteome</keyword>
<organism>
    <name type="scientific">Staphylococcus saprophyticus subsp. saprophyticus (strain ATCC 15305 / DSM 20229 / NCIMB 8711 / NCTC 7292 / S-41)</name>
    <dbReference type="NCBI Taxonomy" id="342451"/>
    <lineage>
        <taxon>Bacteria</taxon>
        <taxon>Bacillati</taxon>
        <taxon>Bacillota</taxon>
        <taxon>Bacilli</taxon>
        <taxon>Bacillales</taxon>
        <taxon>Staphylococcaceae</taxon>
        <taxon>Staphylococcus</taxon>
    </lineage>
</organism>
<comment type="subcellular location">
    <subcellularLocation>
        <location evidence="1">Cytoplasm</location>
    </subcellularLocation>
</comment>
<comment type="similarity">
    <text evidence="2">Belongs to the universal stress protein A family.</text>
</comment>
<gene>
    <name type="ordered locus">SSP1056</name>
</gene>
<evidence type="ECO:0000250" key="1"/>
<evidence type="ECO:0000305" key="2"/>
<reference key="1">
    <citation type="journal article" date="2005" name="Proc. Natl. Acad. Sci. U.S.A.">
        <title>Whole genome sequence of Staphylococcus saprophyticus reveals the pathogenesis of uncomplicated urinary tract infection.</title>
        <authorList>
            <person name="Kuroda M."/>
            <person name="Yamashita A."/>
            <person name="Hirakawa H."/>
            <person name="Kumano M."/>
            <person name="Morikawa K."/>
            <person name="Higashide M."/>
            <person name="Maruyama A."/>
            <person name="Inose Y."/>
            <person name="Matoba K."/>
            <person name="Toh H."/>
            <person name="Kuhara S."/>
            <person name="Hattori M."/>
            <person name="Ohta T."/>
        </authorList>
    </citation>
    <scope>NUCLEOTIDE SEQUENCE [LARGE SCALE GENOMIC DNA]</scope>
    <source>
        <strain>ATCC 15305 / DSM 20229 / NCIMB 8711 / NCTC 7292 / S-41</strain>
    </source>
</reference>
<name>Y1056_STAS1</name>
<accession>Q49YE0</accession>
<dbReference type="EMBL" id="AP008934">
    <property type="protein sequence ID" value="BAE18201.1"/>
    <property type="molecule type" value="Genomic_DNA"/>
</dbReference>
<dbReference type="RefSeq" id="WP_011302899.1">
    <property type="nucleotide sequence ID" value="NZ_MTGA01000033.1"/>
</dbReference>
<dbReference type="SMR" id="Q49YE0"/>
<dbReference type="GeneID" id="3615424"/>
<dbReference type="KEGG" id="ssp:SSP1056"/>
<dbReference type="PATRIC" id="fig|342451.11.peg.1055"/>
<dbReference type="eggNOG" id="COG0589">
    <property type="taxonomic scope" value="Bacteria"/>
</dbReference>
<dbReference type="HOGENOM" id="CLU_049301_16_0_9"/>
<dbReference type="OrthoDB" id="9789668at2"/>
<dbReference type="Proteomes" id="UP000006371">
    <property type="component" value="Chromosome"/>
</dbReference>
<dbReference type="GO" id="GO:0005737">
    <property type="term" value="C:cytoplasm"/>
    <property type="evidence" value="ECO:0007669"/>
    <property type="project" value="UniProtKB-SubCell"/>
</dbReference>
<dbReference type="CDD" id="cd00293">
    <property type="entry name" value="USP-like"/>
    <property type="match status" value="1"/>
</dbReference>
<dbReference type="Gene3D" id="3.40.50.620">
    <property type="entry name" value="HUPs"/>
    <property type="match status" value="1"/>
</dbReference>
<dbReference type="InterPro" id="IPR014729">
    <property type="entry name" value="Rossmann-like_a/b/a_fold"/>
</dbReference>
<dbReference type="InterPro" id="IPR006015">
    <property type="entry name" value="Universal_stress_UspA"/>
</dbReference>
<dbReference type="InterPro" id="IPR006016">
    <property type="entry name" value="UspA"/>
</dbReference>
<dbReference type="PANTHER" id="PTHR46268">
    <property type="entry name" value="STRESS RESPONSE PROTEIN NHAX"/>
    <property type="match status" value="1"/>
</dbReference>
<dbReference type="PANTHER" id="PTHR46268:SF6">
    <property type="entry name" value="UNIVERSAL STRESS PROTEIN UP12"/>
    <property type="match status" value="1"/>
</dbReference>
<dbReference type="Pfam" id="PF00582">
    <property type="entry name" value="Usp"/>
    <property type="match status" value="1"/>
</dbReference>
<dbReference type="PIRSF" id="PIRSF006276">
    <property type="entry name" value="UspA"/>
    <property type="match status" value="1"/>
</dbReference>
<dbReference type="PRINTS" id="PR01438">
    <property type="entry name" value="UNVRSLSTRESS"/>
</dbReference>
<dbReference type="SUPFAM" id="SSF52402">
    <property type="entry name" value="Adenine nucleotide alpha hydrolases-like"/>
    <property type="match status" value="1"/>
</dbReference>
<feature type="chain" id="PRO_0000288901" description="Putative universal stress protein SSP1056">
    <location>
        <begin position="1"/>
        <end position="167"/>
    </location>
</feature>